<feature type="chain" id="PRO_0000375866" description="Putative uncharacterized protein YvcB">
    <location>
        <begin position="1"/>
        <end position="636"/>
    </location>
</feature>
<reference key="1">
    <citation type="submission" date="1997-04" db="EMBL/GenBank/DDBJ databases">
        <authorList>
            <person name="Denizot F."/>
        </authorList>
    </citation>
    <scope>NUCLEOTIDE SEQUENCE [GENOMIC DNA]</scope>
</reference>
<reference key="2">
    <citation type="journal article" date="1997" name="Nature">
        <title>The complete genome sequence of the Gram-positive bacterium Bacillus subtilis.</title>
        <authorList>
            <person name="Kunst F."/>
            <person name="Ogasawara N."/>
            <person name="Moszer I."/>
            <person name="Albertini A.M."/>
            <person name="Alloni G."/>
            <person name="Azevedo V."/>
            <person name="Bertero M.G."/>
            <person name="Bessieres P."/>
            <person name="Bolotin A."/>
            <person name="Borchert S."/>
            <person name="Borriss R."/>
            <person name="Boursier L."/>
            <person name="Brans A."/>
            <person name="Braun M."/>
            <person name="Brignell S.C."/>
            <person name="Bron S."/>
            <person name="Brouillet S."/>
            <person name="Bruschi C.V."/>
            <person name="Caldwell B."/>
            <person name="Capuano V."/>
            <person name="Carter N.M."/>
            <person name="Choi S.-K."/>
            <person name="Codani J.-J."/>
            <person name="Connerton I.F."/>
            <person name="Cummings N.J."/>
            <person name="Daniel R.A."/>
            <person name="Denizot F."/>
            <person name="Devine K.M."/>
            <person name="Duesterhoeft A."/>
            <person name="Ehrlich S.D."/>
            <person name="Emmerson P.T."/>
            <person name="Entian K.-D."/>
            <person name="Errington J."/>
            <person name="Fabret C."/>
            <person name="Ferrari E."/>
            <person name="Foulger D."/>
            <person name="Fritz C."/>
            <person name="Fujita M."/>
            <person name="Fujita Y."/>
            <person name="Fuma S."/>
            <person name="Galizzi A."/>
            <person name="Galleron N."/>
            <person name="Ghim S.-Y."/>
            <person name="Glaser P."/>
            <person name="Goffeau A."/>
            <person name="Golightly E.J."/>
            <person name="Grandi G."/>
            <person name="Guiseppi G."/>
            <person name="Guy B.J."/>
            <person name="Haga K."/>
            <person name="Haiech J."/>
            <person name="Harwood C.R."/>
            <person name="Henaut A."/>
            <person name="Hilbert H."/>
            <person name="Holsappel S."/>
            <person name="Hosono S."/>
            <person name="Hullo M.-F."/>
            <person name="Itaya M."/>
            <person name="Jones L.-M."/>
            <person name="Joris B."/>
            <person name="Karamata D."/>
            <person name="Kasahara Y."/>
            <person name="Klaerr-Blanchard M."/>
            <person name="Klein C."/>
            <person name="Kobayashi Y."/>
            <person name="Koetter P."/>
            <person name="Koningstein G."/>
            <person name="Krogh S."/>
            <person name="Kumano M."/>
            <person name="Kurita K."/>
            <person name="Lapidus A."/>
            <person name="Lardinois S."/>
            <person name="Lauber J."/>
            <person name="Lazarevic V."/>
            <person name="Lee S.-M."/>
            <person name="Levine A."/>
            <person name="Liu H."/>
            <person name="Masuda S."/>
            <person name="Mauel C."/>
            <person name="Medigue C."/>
            <person name="Medina N."/>
            <person name="Mellado R.P."/>
            <person name="Mizuno M."/>
            <person name="Moestl D."/>
            <person name="Nakai S."/>
            <person name="Noback M."/>
            <person name="Noone D."/>
            <person name="O'Reilly M."/>
            <person name="Ogawa K."/>
            <person name="Ogiwara A."/>
            <person name="Oudega B."/>
            <person name="Park S.-H."/>
            <person name="Parro V."/>
            <person name="Pohl T.M."/>
            <person name="Portetelle D."/>
            <person name="Porwollik S."/>
            <person name="Prescott A.M."/>
            <person name="Presecan E."/>
            <person name="Pujic P."/>
            <person name="Purnelle B."/>
            <person name="Rapoport G."/>
            <person name="Rey M."/>
            <person name="Reynolds S."/>
            <person name="Rieger M."/>
            <person name="Rivolta C."/>
            <person name="Rocha E."/>
            <person name="Roche B."/>
            <person name="Rose M."/>
            <person name="Sadaie Y."/>
            <person name="Sato T."/>
            <person name="Scanlan E."/>
            <person name="Schleich S."/>
            <person name="Schroeter R."/>
            <person name="Scoffone F."/>
            <person name="Sekiguchi J."/>
            <person name="Sekowska A."/>
            <person name="Seror S.J."/>
            <person name="Serror P."/>
            <person name="Shin B.-S."/>
            <person name="Soldo B."/>
            <person name="Sorokin A."/>
            <person name="Tacconi E."/>
            <person name="Takagi T."/>
            <person name="Takahashi H."/>
            <person name="Takemaru K."/>
            <person name="Takeuchi M."/>
            <person name="Tamakoshi A."/>
            <person name="Tanaka T."/>
            <person name="Terpstra P."/>
            <person name="Tognoni A."/>
            <person name="Tosato V."/>
            <person name="Uchiyama S."/>
            <person name="Vandenbol M."/>
            <person name="Vannier F."/>
            <person name="Vassarotti A."/>
            <person name="Viari A."/>
            <person name="Wambutt R."/>
            <person name="Wedler E."/>
            <person name="Wedler H."/>
            <person name="Weitzenegger T."/>
            <person name="Winters P."/>
            <person name="Wipat A."/>
            <person name="Yamamoto H."/>
            <person name="Yamane K."/>
            <person name="Yasumoto K."/>
            <person name="Yata K."/>
            <person name="Yoshida K."/>
            <person name="Yoshikawa H.-F."/>
            <person name="Zumstein E."/>
            <person name="Yoshikawa H."/>
            <person name="Danchin A."/>
        </authorList>
    </citation>
    <scope>NUCLEOTIDE SEQUENCE [LARGE SCALE GENOMIC DNA]</scope>
    <source>
        <strain>168</strain>
    </source>
</reference>
<reference key="3">
    <citation type="submission" date="1997-08" db="EMBL/GenBank/DDBJ databases">
        <title>Nucleotide sequence of the 300-304 chromosomal segment of Bacillus subtilis.</title>
        <authorList>
            <person name="Lazarevic V."/>
            <person name="Soldo B."/>
            <person name="Rivolta C."/>
            <person name="Reynolds S."/>
            <person name="Mauel C."/>
            <person name="Karamata D."/>
        </authorList>
    </citation>
    <scope>NUCLEOTIDE SEQUENCE [GENOMIC DNA] OF 1-460</scope>
</reference>
<proteinExistence type="predicted"/>
<name>YVCB_BACSU</name>
<dbReference type="EMBL" id="Z94043">
    <property type="protein sequence ID" value="CAB08071.1"/>
    <property type="molecule type" value="Genomic_DNA"/>
</dbReference>
<dbReference type="EMBL" id="AL009126">
    <property type="protein sequence ID" value="CAB15489.1"/>
    <property type="molecule type" value="Genomic_DNA"/>
</dbReference>
<dbReference type="EMBL" id="AF017113">
    <property type="protein sequence ID" value="AAC67302.1"/>
    <property type="molecule type" value="Genomic_DNA"/>
</dbReference>
<dbReference type="PIR" id="C70031">
    <property type="entry name" value="C70031"/>
</dbReference>
<dbReference type="RefSeq" id="NP_391364.1">
    <property type="nucleotide sequence ID" value="NC_000964.3"/>
</dbReference>
<dbReference type="RefSeq" id="WP_003242583.1">
    <property type="nucleotide sequence ID" value="NZ_OZ025638.1"/>
</dbReference>
<dbReference type="FunCoup" id="O06966">
    <property type="interactions" value="5"/>
</dbReference>
<dbReference type="IntAct" id="O06966">
    <property type="interactions" value="2"/>
</dbReference>
<dbReference type="STRING" id="224308.BSU34840"/>
<dbReference type="PaxDb" id="224308-BSU34840"/>
<dbReference type="EnsemblBacteria" id="CAB15489">
    <property type="protein sequence ID" value="CAB15489"/>
    <property type="gene ID" value="BSU_34840"/>
</dbReference>
<dbReference type="GeneID" id="936563"/>
<dbReference type="KEGG" id="bsu:BSU34840"/>
<dbReference type="PATRIC" id="fig|224308.179.peg.3772"/>
<dbReference type="eggNOG" id="ENOG502Z93A">
    <property type="taxonomic scope" value="Bacteria"/>
</dbReference>
<dbReference type="InParanoid" id="O06966"/>
<dbReference type="OrthoDB" id="2712710at2"/>
<dbReference type="BioCyc" id="BSUB:BSU34840-MONOMER"/>
<dbReference type="Proteomes" id="UP000001570">
    <property type="component" value="Chromosome"/>
</dbReference>
<dbReference type="InterPro" id="IPR046742">
    <property type="entry name" value="DUF6792"/>
</dbReference>
<dbReference type="Pfam" id="PF20591">
    <property type="entry name" value="DUF6792"/>
    <property type="match status" value="1"/>
</dbReference>
<organism>
    <name type="scientific">Bacillus subtilis (strain 168)</name>
    <dbReference type="NCBI Taxonomy" id="224308"/>
    <lineage>
        <taxon>Bacteria</taxon>
        <taxon>Bacillati</taxon>
        <taxon>Bacillota</taxon>
        <taxon>Bacilli</taxon>
        <taxon>Bacillales</taxon>
        <taxon>Bacillaceae</taxon>
        <taxon>Bacillus</taxon>
    </lineage>
</organism>
<sequence>MGNKNVFENENVKLRLIDLEYDYKQKFASTIASEVKKAKKDFEADIRRIYKEETHHDLPENMKIEIYTSNELVNQNTSIQSSTRESGYDGTAIHIIDEKKHIDQLQIISEGSADNKDWSYNFFGLFLGIDHSQYEATKEFTNKAKKAAGNSEDLKTFALGHSLANNNQVMVQLIDGEYDEVYGVNGAQVNIDQLLETDESLYRYVIRKFSYKYEDIDSIPPEKLKKEIQKYYEDKGVTTNITQRISKDDPLYGVSGKADFITFGDVKMADTNTSVKGIRNIMDGVPDEDVRSIQKFLQKYKDDYEKDGLNGFIKAASGIDIDLIEKVKNTDGALKKVSVLYEHFDDVKQMYGRIKEELPSFLGFLHTLLRNSGPVVDQLAENGYIDETQKKVIKKELTNINASMRGIESRYEHFIDHLKHGQFMQALKDVGEIVDYVKSILSSLKTLDTETKDALKLIVDGHSIVQMLNALSKEKGFSYKGSDIYFTGKSGSGETIQVNLSSAVRIYQNGMKIVEDMEDAISKYQKVYSQEIDEDFIDKKQAIITAIHHMEENPSHYAFDLQFRLAAGFSHTFDKLEKISVHESFHTGALPANDGIVAELKKQTTEKRDFIKNIRESIEKLFEKEEMISQLFDFQS</sequence>
<accession>O06966</accession>
<accession>Q795F5</accession>
<accession>Q7BVK7</accession>
<protein>
    <recommendedName>
        <fullName>Putative uncharacterized protein YvcB</fullName>
    </recommendedName>
</protein>
<gene>
    <name type="primary">yvcB</name>
    <name type="synonym">yvrB</name>
    <name type="ordered locus">BSU34840</name>
</gene>
<keyword id="KW-1185">Reference proteome</keyword>